<comment type="similarity">
    <text evidence="1">Belongs to the Mo25 family.</text>
</comment>
<comment type="sequence caution" evidence="1">
    <conflict type="erroneous gene model prediction">
        <sequence resource="EMBL-CDS" id="CAB10508"/>
    </conflict>
</comment>
<protein>
    <recommendedName>
        <fullName>Putative MO25-like protein At4g17270</fullName>
    </recommendedName>
</protein>
<feature type="chain" id="PRO_0000209832" description="Putative MO25-like protein At4g17270">
    <location>
        <begin position="1"/>
        <end position="343"/>
    </location>
</feature>
<proteinExistence type="evidence at transcript level"/>
<gene>
    <name type="ordered locus">At4g17270</name>
    <name type="ORF">dl4670w</name>
</gene>
<sequence>MRGLFKSKPRTPADIVRQTRDLLLYADRSNSFPDLRESKREEKMVELSKSIRDLKLILYGNSEAEPVAEACAQLTQEFFKADTLRRLLTSLPNLNLEARKDATQVVANLQRQQVNSRLIAADYLESNIDLMDFLVDGFENTDMALHYGTMFRECIRHQIVAKYVLDSEHVKKFFYYIQLPNFDIAADAAATFKELLTRHKSTVAEFLIKNEDWFFADYNSKLLESTNYITRRQAIKLLGDILLDRSNSAVMTKYVSSMDNLRILMNLLRESSKTIQIEAFHVFKLFVANQNKPSDIANILVANRNKLLRLLADIKPDKEDERFDADKAQVVREIANLKLRELA</sequence>
<keyword id="KW-1185">Reference proteome</keyword>
<reference key="1">
    <citation type="journal article" date="1998" name="Nature">
        <title>Analysis of 1.9 Mb of contiguous sequence from chromosome 4 of Arabidopsis thaliana.</title>
        <authorList>
            <person name="Bevan M."/>
            <person name="Bancroft I."/>
            <person name="Bent E."/>
            <person name="Love K."/>
            <person name="Goodman H.M."/>
            <person name="Dean C."/>
            <person name="Bergkamp R."/>
            <person name="Dirkse W."/>
            <person name="van Staveren M."/>
            <person name="Stiekema W."/>
            <person name="Drost L."/>
            <person name="Ridley P."/>
            <person name="Hudson S.-A."/>
            <person name="Patel K."/>
            <person name="Murphy G."/>
            <person name="Piffanelli P."/>
            <person name="Wedler H."/>
            <person name="Wedler E."/>
            <person name="Wambutt R."/>
            <person name="Weitzenegger T."/>
            <person name="Pohl T."/>
            <person name="Terryn N."/>
            <person name="Gielen J."/>
            <person name="Villarroel R."/>
            <person name="De Clercq R."/>
            <person name="van Montagu M."/>
            <person name="Lecharny A."/>
            <person name="Aubourg S."/>
            <person name="Gy I."/>
            <person name="Kreis M."/>
            <person name="Lao N."/>
            <person name="Kavanagh T."/>
            <person name="Hempel S."/>
            <person name="Kotter P."/>
            <person name="Entian K.-D."/>
            <person name="Rieger M."/>
            <person name="Schaefer M."/>
            <person name="Funk B."/>
            <person name="Mueller-Auer S."/>
            <person name="Silvey M."/>
            <person name="James R."/>
            <person name="Monfort A."/>
            <person name="Pons A."/>
            <person name="Puigdomenech P."/>
            <person name="Douka A."/>
            <person name="Voukelatou E."/>
            <person name="Milioni D."/>
            <person name="Hatzopoulos P."/>
            <person name="Piravandi E."/>
            <person name="Obermaier B."/>
            <person name="Hilbert H."/>
            <person name="Duesterhoeft A."/>
            <person name="Moores T."/>
            <person name="Jones J.D.G."/>
            <person name="Eneva T."/>
            <person name="Palme K."/>
            <person name="Benes V."/>
            <person name="Rechmann S."/>
            <person name="Ansorge W."/>
            <person name="Cooke R."/>
            <person name="Berger C."/>
            <person name="Delseny M."/>
            <person name="Voet M."/>
            <person name="Volckaert G."/>
            <person name="Mewes H.-W."/>
            <person name="Klosterman S."/>
            <person name="Schueller C."/>
            <person name="Chalwatzis N."/>
        </authorList>
    </citation>
    <scope>NUCLEOTIDE SEQUENCE [LARGE SCALE GENOMIC DNA]</scope>
    <source>
        <strain>cv. Columbia</strain>
    </source>
</reference>
<reference key="2">
    <citation type="journal article" date="1999" name="Nature">
        <title>Sequence and analysis of chromosome 4 of the plant Arabidopsis thaliana.</title>
        <authorList>
            <person name="Mayer K.F.X."/>
            <person name="Schueller C."/>
            <person name="Wambutt R."/>
            <person name="Murphy G."/>
            <person name="Volckaert G."/>
            <person name="Pohl T."/>
            <person name="Duesterhoeft A."/>
            <person name="Stiekema W."/>
            <person name="Entian K.-D."/>
            <person name="Terryn N."/>
            <person name="Harris B."/>
            <person name="Ansorge W."/>
            <person name="Brandt P."/>
            <person name="Grivell L.A."/>
            <person name="Rieger M."/>
            <person name="Weichselgartner M."/>
            <person name="de Simone V."/>
            <person name="Obermaier B."/>
            <person name="Mache R."/>
            <person name="Mueller M."/>
            <person name="Kreis M."/>
            <person name="Delseny M."/>
            <person name="Puigdomenech P."/>
            <person name="Watson M."/>
            <person name="Schmidtheini T."/>
            <person name="Reichert B."/>
            <person name="Portetelle D."/>
            <person name="Perez-Alonso M."/>
            <person name="Boutry M."/>
            <person name="Bancroft I."/>
            <person name="Vos P."/>
            <person name="Hoheisel J."/>
            <person name="Zimmermann W."/>
            <person name="Wedler H."/>
            <person name="Ridley P."/>
            <person name="Langham S.-A."/>
            <person name="McCullagh B."/>
            <person name="Bilham L."/>
            <person name="Robben J."/>
            <person name="van der Schueren J."/>
            <person name="Grymonprez B."/>
            <person name="Chuang Y.-J."/>
            <person name="Vandenbussche F."/>
            <person name="Braeken M."/>
            <person name="Weltjens I."/>
            <person name="Voet M."/>
            <person name="Bastiaens I."/>
            <person name="Aert R."/>
            <person name="Defoor E."/>
            <person name="Weitzenegger T."/>
            <person name="Bothe G."/>
            <person name="Ramsperger U."/>
            <person name="Hilbert H."/>
            <person name="Braun M."/>
            <person name="Holzer E."/>
            <person name="Brandt A."/>
            <person name="Peters S."/>
            <person name="van Staveren M."/>
            <person name="Dirkse W."/>
            <person name="Mooijman P."/>
            <person name="Klein Lankhorst R."/>
            <person name="Rose M."/>
            <person name="Hauf J."/>
            <person name="Koetter P."/>
            <person name="Berneiser S."/>
            <person name="Hempel S."/>
            <person name="Feldpausch M."/>
            <person name="Lamberth S."/>
            <person name="Van den Daele H."/>
            <person name="De Keyser A."/>
            <person name="Buysshaert C."/>
            <person name="Gielen J."/>
            <person name="Villarroel R."/>
            <person name="De Clercq R."/>
            <person name="van Montagu M."/>
            <person name="Rogers J."/>
            <person name="Cronin A."/>
            <person name="Quail M.A."/>
            <person name="Bray-Allen S."/>
            <person name="Clark L."/>
            <person name="Doggett J."/>
            <person name="Hall S."/>
            <person name="Kay M."/>
            <person name="Lennard N."/>
            <person name="McLay K."/>
            <person name="Mayes R."/>
            <person name="Pettett A."/>
            <person name="Rajandream M.A."/>
            <person name="Lyne M."/>
            <person name="Benes V."/>
            <person name="Rechmann S."/>
            <person name="Borkova D."/>
            <person name="Bloecker H."/>
            <person name="Scharfe M."/>
            <person name="Grimm M."/>
            <person name="Loehnert T.-H."/>
            <person name="Dose S."/>
            <person name="de Haan M."/>
            <person name="Maarse A.C."/>
            <person name="Schaefer M."/>
            <person name="Mueller-Auer S."/>
            <person name="Gabel C."/>
            <person name="Fuchs M."/>
            <person name="Fartmann B."/>
            <person name="Granderath K."/>
            <person name="Dauner D."/>
            <person name="Herzl A."/>
            <person name="Neumann S."/>
            <person name="Argiriou A."/>
            <person name="Vitale D."/>
            <person name="Liguori R."/>
            <person name="Piravandi E."/>
            <person name="Massenet O."/>
            <person name="Quigley F."/>
            <person name="Clabauld G."/>
            <person name="Muendlein A."/>
            <person name="Felber R."/>
            <person name="Schnabl S."/>
            <person name="Hiller R."/>
            <person name="Schmidt W."/>
            <person name="Lecharny A."/>
            <person name="Aubourg S."/>
            <person name="Chefdor F."/>
            <person name="Cooke R."/>
            <person name="Berger C."/>
            <person name="Monfort A."/>
            <person name="Casacuberta E."/>
            <person name="Gibbons T."/>
            <person name="Weber N."/>
            <person name="Vandenbol M."/>
            <person name="Bargues M."/>
            <person name="Terol J."/>
            <person name="Torres A."/>
            <person name="Perez-Perez A."/>
            <person name="Purnelle B."/>
            <person name="Bent E."/>
            <person name="Johnson S."/>
            <person name="Tacon D."/>
            <person name="Jesse T."/>
            <person name="Heijnen L."/>
            <person name="Schwarz S."/>
            <person name="Scholler P."/>
            <person name="Heber S."/>
            <person name="Francs P."/>
            <person name="Bielke C."/>
            <person name="Frishman D."/>
            <person name="Haase D."/>
            <person name="Lemcke K."/>
            <person name="Mewes H.-W."/>
            <person name="Stocker S."/>
            <person name="Zaccaria P."/>
            <person name="Bevan M."/>
            <person name="Wilson R.K."/>
            <person name="de la Bastide M."/>
            <person name="Habermann K."/>
            <person name="Parnell L."/>
            <person name="Dedhia N."/>
            <person name="Gnoj L."/>
            <person name="Schutz K."/>
            <person name="Huang E."/>
            <person name="Spiegel L."/>
            <person name="Sekhon M."/>
            <person name="Murray J."/>
            <person name="Sheet P."/>
            <person name="Cordes M."/>
            <person name="Abu-Threideh J."/>
            <person name="Stoneking T."/>
            <person name="Kalicki J."/>
            <person name="Graves T."/>
            <person name="Harmon G."/>
            <person name="Edwards J."/>
            <person name="Latreille P."/>
            <person name="Courtney L."/>
            <person name="Cloud J."/>
            <person name="Abbott A."/>
            <person name="Scott K."/>
            <person name="Johnson D."/>
            <person name="Minx P."/>
            <person name="Bentley D."/>
            <person name="Fulton B."/>
            <person name="Miller N."/>
            <person name="Greco T."/>
            <person name="Kemp K."/>
            <person name="Kramer J."/>
            <person name="Fulton L."/>
            <person name="Mardis E."/>
            <person name="Dante M."/>
            <person name="Pepin K."/>
            <person name="Hillier L.W."/>
            <person name="Nelson J."/>
            <person name="Spieth J."/>
            <person name="Ryan E."/>
            <person name="Andrews S."/>
            <person name="Geisel C."/>
            <person name="Layman D."/>
            <person name="Du H."/>
            <person name="Ali J."/>
            <person name="Berghoff A."/>
            <person name="Jones K."/>
            <person name="Drone K."/>
            <person name="Cotton M."/>
            <person name="Joshu C."/>
            <person name="Antonoiu B."/>
            <person name="Zidanic M."/>
            <person name="Strong C."/>
            <person name="Sun H."/>
            <person name="Lamar B."/>
            <person name="Yordan C."/>
            <person name="Ma P."/>
            <person name="Zhong J."/>
            <person name="Preston R."/>
            <person name="Vil D."/>
            <person name="Shekher M."/>
            <person name="Matero A."/>
            <person name="Shah R."/>
            <person name="Swaby I.K."/>
            <person name="O'Shaughnessy A."/>
            <person name="Rodriguez M."/>
            <person name="Hoffman J."/>
            <person name="Till S."/>
            <person name="Granat S."/>
            <person name="Shohdy N."/>
            <person name="Hasegawa A."/>
            <person name="Hameed A."/>
            <person name="Lodhi M."/>
            <person name="Johnson A."/>
            <person name="Chen E."/>
            <person name="Marra M.A."/>
            <person name="Martienssen R."/>
            <person name="McCombie W.R."/>
        </authorList>
    </citation>
    <scope>NUCLEOTIDE SEQUENCE [LARGE SCALE GENOMIC DNA]</scope>
    <source>
        <strain>cv. Columbia</strain>
    </source>
</reference>
<reference key="3">
    <citation type="journal article" date="2017" name="Plant J.">
        <title>Araport11: a complete reannotation of the Arabidopsis thaliana reference genome.</title>
        <authorList>
            <person name="Cheng C.Y."/>
            <person name="Krishnakumar V."/>
            <person name="Chan A.P."/>
            <person name="Thibaud-Nissen F."/>
            <person name="Schobel S."/>
            <person name="Town C.D."/>
        </authorList>
    </citation>
    <scope>GENOME REANNOTATION</scope>
    <source>
        <strain>cv. Columbia</strain>
    </source>
</reference>
<reference key="4">
    <citation type="journal article" date="2003" name="Science">
        <title>Empirical analysis of transcriptional activity in the Arabidopsis genome.</title>
        <authorList>
            <person name="Yamada K."/>
            <person name="Lim J."/>
            <person name="Dale J.M."/>
            <person name="Chen H."/>
            <person name="Shinn P."/>
            <person name="Palm C.J."/>
            <person name="Southwick A.M."/>
            <person name="Wu H.C."/>
            <person name="Kim C.J."/>
            <person name="Nguyen M."/>
            <person name="Pham P.K."/>
            <person name="Cheuk R.F."/>
            <person name="Karlin-Newmann G."/>
            <person name="Liu S.X."/>
            <person name="Lam B."/>
            <person name="Sakano H."/>
            <person name="Wu T."/>
            <person name="Yu G."/>
            <person name="Miranda M."/>
            <person name="Quach H.L."/>
            <person name="Tripp M."/>
            <person name="Chang C.H."/>
            <person name="Lee J.M."/>
            <person name="Toriumi M.J."/>
            <person name="Chan M.M."/>
            <person name="Tang C.C."/>
            <person name="Onodera C.S."/>
            <person name="Deng J.M."/>
            <person name="Akiyama K."/>
            <person name="Ansari Y."/>
            <person name="Arakawa T."/>
            <person name="Banh J."/>
            <person name="Banno F."/>
            <person name="Bowser L."/>
            <person name="Brooks S.Y."/>
            <person name="Carninci P."/>
            <person name="Chao Q."/>
            <person name="Choy N."/>
            <person name="Enju A."/>
            <person name="Goldsmith A.D."/>
            <person name="Gurjal M."/>
            <person name="Hansen N.F."/>
            <person name="Hayashizaki Y."/>
            <person name="Johnson-Hopson C."/>
            <person name="Hsuan V.W."/>
            <person name="Iida K."/>
            <person name="Karnes M."/>
            <person name="Khan S."/>
            <person name="Koesema E."/>
            <person name="Ishida J."/>
            <person name="Jiang P.X."/>
            <person name="Jones T."/>
            <person name="Kawai J."/>
            <person name="Kamiya A."/>
            <person name="Meyers C."/>
            <person name="Nakajima M."/>
            <person name="Narusaka M."/>
            <person name="Seki M."/>
            <person name="Sakurai T."/>
            <person name="Satou M."/>
            <person name="Tamse R."/>
            <person name="Vaysberg M."/>
            <person name="Wallender E.K."/>
            <person name="Wong C."/>
            <person name="Yamamura Y."/>
            <person name="Yuan S."/>
            <person name="Shinozaki K."/>
            <person name="Davis R.W."/>
            <person name="Theologis A."/>
            <person name="Ecker J.R."/>
        </authorList>
    </citation>
    <scope>NUCLEOTIDE SEQUENCE [LARGE SCALE MRNA]</scope>
    <source>
        <strain>cv. Columbia</strain>
    </source>
</reference>
<evidence type="ECO:0000305" key="1"/>
<name>MO25M_ARATH</name>
<accession>Q9M0M4</accession>
<accession>O23570</accession>
<organism>
    <name type="scientific">Arabidopsis thaliana</name>
    <name type="common">Mouse-ear cress</name>
    <dbReference type="NCBI Taxonomy" id="3702"/>
    <lineage>
        <taxon>Eukaryota</taxon>
        <taxon>Viridiplantae</taxon>
        <taxon>Streptophyta</taxon>
        <taxon>Embryophyta</taxon>
        <taxon>Tracheophyta</taxon>
        <taxon>Spermatophyta</taxon>
        <taxon>Magnoliopsida</taxon>
        <taxon>eudicotyledons</taxon>
        <taxon>Gunneridae</taxon>
        <taxon>Pentapetalae</taxon>
        <taxon>rosids</taxon>
        <taxon>malvids</taxon>
        <taxon>Brassicales</taxon>
        <taxon>Brassicaceae</taxon>
        <taxon>Camelineae</taxon>
        <taxon>Arabidopsis</taxon>
    </lineage>
</organism>
<dbReference type="EMBL" id="Z97343">
    <property type="protein sequence ID" value="CAB10508.1"/>
    <property type="status" value="ALT_SEQ"/>
    <property type="molecule type" value="Genomic_DNA"/>
</dbReference>
<dbReference type="EMBL" id="AL161546">
    <property type="protein sequence ID" value="CAB78730.1"/>
    <property type="molecule type" value="Genomic_DNA"/>
</dbReference>
<dbReference type="EMBL" id="CP002687">
    <property type="protein sequence ID" value="AEE83872.1"/>
    <property type="molecule type" value="Genomic_DNA"/>
</dbReference>
<dbReference type="EMBL" id="AF380659">
    <property type="protein sequence ID" value="AAK55740.1"/>
    <property type="molecule type" value="mRNA"/>
</dbReference>
<dbReference type="EMBL" id="AY055792">
    <property type="protein sequence ID" value="AAL06959.1"/>
    <property type="molecule type" value="mRNA"/>
</dbReference>
<dbReference type="RefSeq" id="NP_193460.1">
    <property type="nucleotide sequence ID" value="NM_117833.4"/>
</dbReference>
<dbReference type="SMR" id="Q9M0M4"/>
<dbReference type="BioGRID" id="12734">
    <property type="interactions" value="1"/>
</dbReference>
<dbReference type="FunCoup" id="Q9M0M4">
    <property type="interactions" value="4315"/>
</dbReference>
<dbReference type="IntAct" id="Q9M0M4">
    <property type="interactions" value="1"/>
</dbReference>
<dbReference type="STRING" id="3702.Q9M0M4"/>
<dbReference type="iPTMnet" id="Q9M0M4"/>
<dbReference type="PaxDb" id="3702-AT4G17270.1"/>
<dbReference type="ProteomicsDB" id="238257"/>
<dbReference type="EnsemblPlants" id="AT4G17270.1">
    <property type="protein sequence ID" value="AT4G17270.1"/>
    <property type="gene ID" value="AT4G17270"/>
</dbReference>
<dbReference type="GeneID" id="827441"/>
<dbReference type="Gramene" id="AT4G17270.1">
    <property type="protein sequence ID" value="AT4G17270.1"/>
    <property type="gene ID" value="AT4G17270"/>
</dbReference>
<dbReference type="KEGG" id="ath:AT4G17270"/>
<dbReference type="Araport" id="AT4G17270"/>
<dbReference type="TAIR" id="AT4G17270"/>
<dbReference type="eggNOG" id="KOG1566">
    <property type="taxonomic scope" value="Eukaryota"/>
</dbReference>
<dbReference type="HOGENOM" id="CLU_035755_1_1_1"/>
<dbReference type="InParanoid" id="Q9M0M4"/>
<dbReference type="OMA" id="DWFFTEY"/>
<dbReference type="OrthoDB" id="609103at2759"/>
<dbReference type="PhylomeDB" id="Q9M0M4"/>
<dbReference type="PRO" id="PR:Q9M0M4"/>
<dbReference type="Proteomes" id="UP000006548">
    <property type="component" value="Chromosome 4"/>
</dbReference>
<dbReference type="ExpressionAtlas" id="Q9M0M4">
    <property type="expression patterns" value="baseline and differential"/>
</dbReference>
<dbReference type="GO" id="GO:0005829">
    <property type="term" value="C:cytosol"/>
    <property type="evidence" value="ECO:0007005"/>
    <property type="project" value="TAIR"/>
</dbReference>
<dbReference type="FunFam" id="1.25.10.10:FF:000146">
    <property type="entry name" value="putative MO25-like protein At5g47540"/>
    <property type="match status" value="1"/>
</dbReference>
<dbReference type="Gene3D" id="1.25.10.10">
    <property type="entry name" value="Leucine-rich Repeat Variant"/>
    <property type="match status" value="1"/>
</dbReference>
<dbReference type="InterPro" id="IPR011989">
    <property type="entry name" value="ARM-like"/>
</dbReference>
<dbReference type="InterPro" id="IPR016024">
    <property type="entry name" value="ARM-type_fold"/>
</dbReference>
<dbReference type="InterPro" id="IPR013878">
    <property type="entry name" value="Mo25"/>
</dbReference>
<dbReference type="PANTHER" id="PTHR10182">
    <property type="entry name" value="CALCIUM-BINDING PROTEIN 39-RELATED"/>
    <property type="match status" value="1"/>
</dbReference>
<dbReference type="PANTHER" id="PTHR10182:SF19">
    <property type="entry name" value="GENOME ASSEMBLY, CHROMOSOME: A03"/>
    <property type="match status" value="1"/>
</dbReference>
<dbReference type="Pfam" id="PF08569">
    <property type="entry name" value="Mo25"/>
    <property type="match status" value="1"/>
</dbReference>
<dbReference type="SUPFAM" id="SSF48371">
    <property type="entry name" value="ARM repeat"/>
    <property type="match status" value="1"/>
</dbReference>